<evidence type="ECO:0000255" key="1">
    <source>
        <dbReference type="HAMAP-Rule" id="MF_00019"/>
    </source>
</evidence>
<name>PLSX_BLOFL</name>
<keyword id="KW-0963">Cytoplasm</keyword>
<keyword id="KW-0444">Lipid biosynthesis</keyword>
<keyword id="KW-0443">Lipid metabolism</keyword>
<keyword id="KW-0594">Phospholipid biosynthesis</keyword>
<keyword id="KW-1208">Phospholipid metabolism</keyword>
<keyword id="KW-1185">Reference proteome</keyword>
<keyword id="KW-0808">Transferase</keyword>
<organism>
    <name type="scientific">Blochmanniella floridana</name>
    <dbReference type="NCBI Taxonomy" id="203907"/>
    <lineage>
        <taxon>Bacteria</taxon>
        <taxon>Pseudomonadati</taxon>
        <taxon>Pseudomonadota</taxon>
        <taxon>Gammaproteobacteria</taxon>
        <taxon>Enterobacterales</taxon>
        <taxon>Enterobacteriaceae</taxon>
        <taxon>ant endosymbionts</taxon>
        <taxon>Candidatus Blochmanniella</taxon>
    </lineage>
</organism>
<gene>
    <name evidence="1" type="primary">plsX</name>
    <name type="ordered locus">Bfl407</name>
</gene>
<dbReference type="EC" id="2.3.1.274" evidence="1"/>
<dbReference type="EMBL" id="BX248583">
    <property type="protein sequence ID" value="CAD83473.1"/>
    <property type="molecule type" value="Genomic_DNA"/>
</dbReference>
<dbReference type="SMR" id="Q7VR17"/>
<dbReference type="STRING" id="203907.Bfl407"/>
<dbReference type="KEGG" id="bfl:Bfl407"/>
<dbReference type="eggNOG" id="COG0416">
    <property type="taxonomic scope" value="Bacteria"/>
</dbReference>
<dbReference type="HOGENOM" id="CLU_039379_1_0_6"/>
<dbReference type="OrthoDB" id="9806408at2"/>
<dbReference type="UniPathway" id="UPA00085"/>
<dbReference type="Proteomes" id="UP000002192">
    <property type="component" value="Chromosome"/>
</dbReference>
<dbReference type="GO" id="GO:0005737">
    <property type="term" value="C:cytoplasm"/>
    <property type="evidence" value="ECO:0007669"/>
    <property type="project" value="UniProtKB-SubCell"/>
</dbReference>
<dbReference type="GO" id="GO:0043811">
    <property type="term" value="F:phosphate:acyl-[acyl carrier protein] acyltransferase activity"/>
    <property type="evidence" value="ECO:0007669"/>
    <property type="project" value="UniProtKB-UniRule"/>
</dbReference>
<dbReference type="GO" id="GO:0006633">
    <property type="term" value="P:fatty acid biosynthetic process"/>
    <property type="evidence" value="ECO:0007669"/>
    <property type="project" value="UniProtKB-UniRule"/>
</dbReference>
<dbReference type="GO" id="GO:0008654">
    <property type="term" value="P:phospholipid biosynthetic process"/>
    <property type="evidence" value="ECO:0007669"/>
    <property type="project" value="UniProtKB-KW"/>
</dbReference>
<dbReference type="Gene3D" id="3.40.718.10">
    <property type="entry name" value="Isopropylmalate Dehydrogenase"/>
    <property type="match status" value="1"/>
</dbReference>
<dbReference type="HAMAP" id="MF_00019">
    <property type="entry name" value="PlsX"/>
    <property type="match status" value="1"/>
</dbReference>
<dbReference type="InterPro" id="IPR003664">
    <property type="entry name" value="FA_synthesis"/>
</dbReference>
<dbReference type="InterPro" id="IPR012281">
    <property type="entry name" value="Phospholipid_synth_PlsX-like"/>
</dbReference>
<dbReference type="NCBIfam" id="TIGR00182">
    <property type="entry name" value="plsX"/>
    <property type="match status" value="1"/>
</dbReference>
<dbReference type="PANTHER" id="PTHR30100">
    <property type="entry name" value="FATTY ACID/PHOSPHOLIPID SYNTHESIS PROTEIN PLSX"/>
    <property type="match status" value="1"/>
</dbReference>
<dbReference type="PANTHER" id="PTHR30100:SF1">
    <property type="entry name" value="PHOSPHATE ACYLTRANSFERASE"/>
    <property type="match status" value="1"/>
</dbReference>
<dbReference type="Pfam" id="PF02504">
    <property type="entry name" value="FA_synthesis"/>
    <property type="match status" value="1"/>
</dbReference>
<dbReference type="PIRSF" id="PIRSF002465">
    <property type="entry name" value="Phsphlp_syn_PlsX"/>
    <property type="match status" value="1"/>
</dbReference>
<dbReference type="SUPFAM" id="SSF53659">
    <property type="entry name" value="Isocitrate/Isopropylmalate dehydrogenase-like"/>
    <property type="match status" value="1"/>
</dbReference>
<feature type="chain" id="PRO_0000189860" description="Phosphate acyltransferase">
    <location>
        <begin position="1"/>
        <end position="344"/>
    </location>
</feature>
<reference key="1">
    <citation type="journal article" date="2003" name="Proc. Natl. Acad. Sci. U.S.A.">
        <title>The genome sequence of Blochmannia floridanus: comparative analysis of reduced genomes.</title>
        <authorList>
            <person name="Gil R."/>
            <person name="Silva F.J."/>
            <person name="Zientz E."/>
            <person name="Delmotte F."/>
            <person name="Gonzalez-Candelas F."/>
            <person name="Latorre A."/>
            <person name="Rausell C."/>
            <person name="Kamerbeek J."/>
            <person name="Gadau J."/>
            <person name="Hoelldobler B."/>
            <person name="van Ham R.C.H.J."/>
            <person name="Gross R."/>
            <person name="Moya A."/>
        </authorList>
    </citation>
    <scope>NUCLEOTIDE SEQUENCE [LARGE SCALE GENOMIC DNA]</scope>
</reference>
<sequence>MKYLVLALDAMGGDFGPKVTVPASLEALSLHPKLKLLLVGDPDVIKPILDGFNVKYLRRLTLIPSKSVVNDNDRPAQAIRLSKNTSMRIALELIKSGHAQACVSAGNTGALMGLSKLVIKLINGIDRPALTALLPHQKQGKTVILDLGANILCNDSMLVQFAIMGSVLSEQIAGIVNPRVALLNIGSEETKGLDNIRCASKILHTIPSIHYIGYIEANDLLMGKTDVLVCDGFAGNITLKTMEGMMRLILSLLTTSEEKNKLYYFIRKIKMWMNKCVFKQFVQLNPDLYNGAYLVGLRSTVIKSHGGANKHAFTKAITQAMYAVERRIPEKIADRLNTMMLYKK</sequence>
<protein>
    <recommendedName>
        <fullName evidence="1">Phosphate acyltransferase</fullName>
        <ecNumber evidence="1">2.3.1.274</ecNumber>
    </recommendedName>
    <alternativeName>
        <fullName evidence="1">Acyl-ACP phosphotransacylase</fullName>
    </alternativeName>
    <alternativeName>
        <fullName evidence="1">Acyl-[acyl-carrier-protein]--phosphate acyltransferase</fullName>
    </alternativeName>
    <alternativeName>
        <fullName evidence="1">Phosphate-acyl-ACP acyltransferase</fullName>
    </alternativeName>
</protein>
<proteinExistence type="inferred from homology"/>
<accession>Q7VR17</accession>
<comment type="function">
    <text evidence="1">Catalyzes the reversible formation of acyl-phosphate (acyl-PO(4)) from acyl-[acyl-carrier-protein] (acyl-ACP). This enzyme utilizes acyl-ACP as fatty acyl donor, but not acyl-CoA.</text>
</comment>
<comment type="catalytic activity">
    <reaction evidence="1">
        <text>a fatty acyl-[ACP] + phosphate = an acyl phosphate + holo-[ACP]</text>
        <dbReference type="Rhea" id="RHEA:42292"/>
        <dbReference type="Rhea" id="RHEA-COMP:9685"/>
        <dbReference type="Rhea" id="RHEA-COMP:14125"/>
        <dbReference type="ChEBI" id="CHEBI:43474"/>
        <dbReference type="ChEBI" id="CHEBI:59918"/>
        <dbReference type="ChEBI" id="CHEBI:64479"/>
        <dbReference type="ChEBI" id="CHEBI:138651"/>
        <dbReference type="EC" id="2.3.1.274"/>
    </reaction>
</comment>
<comment type="pathway">
    <text evidence="1">Lipid metabolism; phospholipid metabolism.</text>
</comment>
<comment type="subunit">
    <text evidence="1">Homodimer. Probably interacts with PlsY.</text>
</comment>
<comment type="subcellular location">
    <subcellularLocation>
        <location evidence="1">Cytoplasm</location>
    </subcellularLocation>
    <text evidence="1">Associated with the membrane possibly through PlsY.</text>
</comment>
<comment type="similarity">
    <text evidence="1">Belongs to the PlsX family.</text>
</comment>